<accession>Q6P0R8</accession>
<accession>Q08C01</accession>
<accession>Q1RLX9</accession>
<gene>
    <name evidence="2" type="primary">shtn1</name>
</gene>
<reference key="1">
    <citation type="submission" date="2004-01" db="EMBL/GenBank/DDBJ databases">
        <authorList>
            <consortium name="NIH - Zebrafish Gene Collection (ZGC) project"/>
        </authorList>
    </citation>
    <scope>NUCLEOTIDE SEQUENCE [LARGE SCALE MRNA]</scope>
    <source>
        <strain>AB</strain>
    </source>
</reference>
<keyword id="KW-0966">Cell projection</keyword>
<keyword id="KW-0175">Coiled coil</keyword>
<keyword id="KW-0963">Cytoplasm</keyword>
<keyword id="KW-0206">Cytoskeleton</keyword>
<keyword id="KW-0217">Developmental protein</keyword>
<keyword id="KW-1185">Reference proteome</keyword>
<name>SHOT1_DANRE</name>
<protein>
    <recommendedName>
        <fullName evidence="3">Shootin-1</fullName>
    </recommendedName>
</protein>
<comment type="function">
    <text evidence="1">Involved in the generation of internal asymmetric signals required for neuronal polarization and neurite outgrowth.</text>
</comment>
<comment type="subcellular location">
    <subcellularLocation>
        <location evidence="4">Perikaryon</location>
    </subcellularLocation>
    <subcellularLocation>
        <location evidence="4">Cell projection</location>
        <location evidence="4">Axon</location>
    </subcellularLocation>
    <subcellularLocation>
        <location evidence="4">Cell projection</location>
        <location evidence="4">Growth cone</location>
    </subcellularLocation>
    <subcellularLocation>
        <location evidence="4">Cytoplasm</location>
        <location evidence="4">Cytoskeleton</location>
    </subcellularLocation>
    <subcellularLocation>
        <location evidence="3">Cell projection</location>
        <location evidence="3">Filopodium</location>
    </subcellularLocation>
    <subcellularLocation>
        <location evidence="3">Cell projection</location>
        <location evidence="3">Lamellipodium</location>
    </subcellularLocation>
</comment>
<comment type="similarity">
    <text evidence="7">Belongs to the shootin family.</text>
</comment>
<comment type="sequence caution" evidence="7">
    <conflict type="erroneous initiation">
        <sequence resource="EMBL-CDS" id="AAH65472"/>
    </conflict>
</comment>
<comment type="sequence caution" evidence="7">
    <conflict type="erroneous initiation">
        <sequence resource="EMBL-CDS" id="AAI15237"/>
    </conflict>
</comment>
<comment type="sequence caution" evidence="7">
    <conflict type="erroneous initiation">
        <sequence resource="EMBL-CDS" id="AAI24481"/>
    </conflict>
</comment>
<proteinExistence type="evidence at transcript level"/>
<dbReference type="EMBL" id="BC065472">
    <property type="protein sequence ID" value="AAH65472.1"/>
    <property type="status" value="ALT_INIT"/>
    <property type="molecule type" value="mRNA"/>
</dbReference>
<dbReference type="EMBL" id="BC115236">
    <property type="protein sequence ID" value="AAI15237.1"/>
    <property type="status" value="ALT_INIT"/>
    <property type="molecule type" value="mRNA"/>
</dbReference>
<dbReference type="EMBL" id="BC124480">
    <property type="protein sequence ID" value="AAI24481.1"/>
    <property type="status" value="ALT_INIT"/>
    <property type="molecule type" value="mRNA"/>
</dbReference>
<dbReference type="RefSeq" id="NP_001185690.1">
    <property type="nucleotide sequence ID" value="NM_001198761.1"/>
</dbReference>
<dbReference type="SMR" id="Q6P0R8"/>
<dbReference type="FunCoup" id="Q6P0R8">
    <property type="interactions" value="126"/>
</dbReference>
<dbReference type="STRING" id="7955.ENSDARP00000058026"/>
<dbReference type="PaxDb" id="7955-ENSDARP00000058026"/>
<dbReference type="Ensembl" id="ENSDART00000058027">
    <property type="protein sequence ID" value="ENSDARP00000058026"/>
    <property type="gene ID" value="ENSDARG00000039697"/>
</dbReference>
<dbReference type="GeneID" id="407656"/>
<dbReference type="KEGG" id="dre:407656"/>
<dbReference type="AGR" id="ZFIN:ZDB-GENE-121127-1"/>
<dbReference type="CTD" id="57698"/>
<dbReference type="ZFIN" id="ZDB-GENE-121127-1">
    <property type="gene designation" value="shtn1"/>
</dbReference>
<dbReference type="eggNOG" id="ENOG502QVVT">
    <property type="taxonomic scope" value="Eukaryota"/>
</dbReference>
<dbReference type="HOGENOM" id="CLU_027649_1_1_1"/>
<dbReference type="InParanoid" id="Q6P0R8"/>
<dbReference type="OMA" id="MQQASQW"/>
<dbReference type="OrthoDB" id="6111338at2759"/>
<dbReference type="PhylomeDB" id="Q6P0R8"/>
<dbReference type="PRO" id="PR:Q6P0R8"/>
<dbReference type="Proteomes" id="UP000000437">
    <property type="component" value="Alternate scaffold 17"/>
</dbReference>
<dbReference type="Proteomes" id="UP000000437">
    <property type="component" value="Chromosome 17"/>
</dbReference>
<dbReference type="Bgee" id="ENSDARG00000039697">
    <property type="expression patterns" value="Expressed in intestine and 17 other cell types or tissues"/>
</dbReference>
<dbReference type="GO" id="GO:0030424">
    <property type="term" value="C:axon"/>
    <property type="evidence" value="ECO:0000250"/>
    <property type="project" value="UniProtKB"/>
</dbReference>
<dbReference type="GO" id="GO:0044295">
    <property type="term" value="C:axonal growth cone"/>
    <property type="evidence" value="ECO:0000250"/>
    <property type="project" value="UniProtKB"/>
</dbReference>
<dbReference type="GO" id="GO:0031252">
    <property type="term" value="C:cell leading edge"/>
    <property type="evidence" value="ECO:0000250"/>
    <property type="project" value="UniProtKB"/>
</dbReference>
<dbReference type="GO" id="GO:0005737">
    <property type="term" value="C:cytoplasm"/>
    <property type="evidence" value="ECO:0000318"/>
    <property type="project" value="GO_Central"/>
</dbReference>
<dbReference type="GO" id="GO:0030175">
    <property type="term" value="C:filopodium"/>
    <property type="evidence" value="ECO:0000250"/>
    <property type="project" value="UniProtKB"/>
</dbReference>
<dbReference type="GO" id="GO:0030426">
    <property type="term" value="C:growth cone"/>
    <property type="evidence" value="ECO:0000250"/>
    <property type="project" value="UniProtKB"/>
</dbReference>
<dbReference type="GO" id="GO:0030027">
    <property type="term" value="C:lamellipodium"/>
    <property type="evidence" value="ECO:0000250"/>
    <property type="project" value="UniProtKB"/>
</dbReference>
<dbReference type="GO" id="GO:0005875">
    <property type="term" value="C:microtubule associated complex"/>
    <property type="evidence" value="ECO:0000250"/>
    <property type="project" value="UniProtKB"/>
</dbReference>
<dbReference type="GO" id="GO:0015630">
    <property type="term" value="C:microtubule cytoskeleton"/>
    <property type="evidence" value="ECO:0000250"/>
    <property type="project" value="UniProtKB"/>
</dbReference>
<dbReference type="GO" id="GO:0043204">
    <property type="term" value="C:perikaryon"/>
    <property type="evidence" value="ECO:0000250"/>
    <property type="project" value="UniProtKB"/>
</dbReference>
<dbReference type="GO" id="GO:0048471">
    <property type="term" value="C:perinuclear region of cytoplasm"/>
    <property type="evidence" value="ECO:0000250"/>
    <property type="project" value="UniProtKB"/>
</dbReference>
<dbReference type="GO" id="GO:0051015">
    <property type="term" value="F:actin filament binding"/>
    <property type="evidence" value="ECO:0000250"/>
    <property type="project" value="UniProtKB"/>
</dbReference>
<dbReference type="GO" id="GO:0061573">
    <property type="term" value="P:actin filament bundle retrograde transport"/>
    <property type="evidence" value="ECO:0000250"/>
    <property type="project" value="UniProtKB"/>
</dbReference>
<dbReference type="GO" id="GO:0007409">
    <property type="term" value="P:axonogenesis"/>
    <property type="evidence" value="ECO:0000250"/>
    <property type="project" value="UniProtKB"/>
</dbReference>
<dbReference type="GO" id="GO:0032488">
    <property type="term" value="P:Cdc42 protein signal transduction"/>
    <property type="evidence" value="ECO:0000250"/>
    <property type="project" value="UniProtKB"/>
</dbReference>
<dbReference type="GO" id="GO:0060327">
    <property type="term" value="P:cytoplasmic actin-based contraction involved in cell motility"/>
    <property type="evidence" value="ECO:0000250"/>
    <property type="project" value="UniProtKB"/>
</dbReference>
<dbReference type="GO" id="GO:0061163">
    <property type="term" value="P:endoplasmic reticulum polarization"/>
    <property type="evidence" value="ECO:0000250"/>
    <property type="project" value="UniProtKB"/>
</dbReference>
<dbReference type="GO" id="GO:0038007">
    <property type="term" value="P:netrin-activated signaling pathway"/>
    <property type="evidence" value="ECO:0000250"/>
    <property type="project" value="UniProtKB"/>
</dbReference>
<dbReference type="GO" id="GO:0048812">
    <property type="term" value="P:neuron projection morphogenesis"/>
    <property type="evidence" value="ECO:0000250"/>
    <property type="project" value="UniProtKB"/>
</dbReference>
<dbReference type="GO" id="GO:0045773">
    <property type="term" value="P:positive regulation of axon extension"/>
    <property type="evidence" value="ECO:0000250"/>
    <property type="project" value="UniProtKB"/>
</dbReference>
<dbReference type="GO" id="GO:2001224">
    <property type="term" value="P:positive regulation of neuron migration"/>
    <property type="evidence" value="ECO:0000250"/>
    <property type="project" value="UniProtKB"/>
</dbReference>
<dbReference type="GO" id="GO:0048920">
    <property type="term" value="P:posterior lateral line neuromast primordium migration"/>
    <property type="evidence" value="ECO:0000315"/>
    <property type="project" value="ZFIN"/>
</dbReference>
<dbReference type="GO" id="GO:0007265">
    <property type="term" value="P:Ras protein signal transduction"/>
    <property type="evidence" value="ECO:0000250"/>
    <property type="project" value="UniProtKB"/>
</dbReference>
<dbReference type="GO" id="GO:2000114">
    <property type="term" value="P:regulation of establishment of cell polarity"/>
    <property type="evidence" value="ECO:0000250"/>
    <property type="project" value="UniProtKB"/>
</dbReference>
<dbReference type="GO" id="GO:0006930">
    <property type="term" value="P:substrate-dependent cell migration, cell extension"/>
    <property type="evidence" value="ECO:0000250"/>
    <property type="project" value="UniProtKB"/>
</dbReference>
<dbReference type="InterPro" id="IPR024849">
    <property type="entry name" value="Shootin-1"/>
</dbReference>
<dbReference type="PANTHER" id="PTHR46606">
    <property type="entry name" value="SHOOTIN-1"/>
    <property type="match status" value="1"/>
</dbReference>
<dbReference type="PANTHER" id="PTHR46606:SF3">
    <property type="entry name" value="SHOOTIN-1"/>
    <property type="match status" value="1"/>
</dbReference>
<sequence length="544" mass="61682">MASKGKKNKVRTNSDLSNQVLLQYESLQKEHEKIKKECKKLQEERDEALRKLNEFESVSHRVIEEVNSIQENLEIEKTCRESVEALASKLNRQNLSLKRKSMLYMSRLAADVVAEISIDDEDDEDAHEEEAGVCSSSHCHIVITELRDKLEEILATKKQLMIDLETTREQLSKTRQELLKEKHDNTVLIAETFQQKKLLGKYNRVSQYALDEFESLQEDLKLERDLRSEAEKFAHEMLIEQKKLKRQSQVLVQSISVGEALQKALAEISTLTHTLEKQRLEHQQQVKGLEEQVNSSEVKKQLTALQRQTDLLEEERKEWQHKHTKAETEAKDLRFTVEELKKKLQQVSNPPTAAPAPPPPPPPPPPPPPPSSSSSNPLSSLLSILRKKKDVSTEIALVEKDSSEKSPEKDVRQQAVDEMMLRIKKGVQLRPVSQTTNRVRPGPKEPTASNSAIQELQGILNTVKRPGPSSSPGPRPPSPSEKSELEKALQRRREAVKSAKNNTNPSSVVDLTQIKQTRSEPGQNTGDQETLRHTTTTICTEQLS</sequence>
<feature type="chain" id="PRO_0000295744" description="Shootin-1">
    <location>
        <begin position="1"/>
        <end position="544"/>
    </location>
</feature>
<feature type="region of interest" description="Disordered" evidence="6">
    <location>
        <begin position="343"/>
        <end position="544"/>
    </location>
</feature>
<feature type="coiled-coil region" evidence="5">
    <location>
        <begin position="17"/>
        <end position="100"/>
    </location>
</feature>
<feature type="coiled-coil region" evidence="5">
    <location>
        <begin position="141"/>
        <end position="184"/>
    </location>
</feature>
<feature type="coiled-coil region" evidence="5">
    <location>
        <begin position="259"/>
        <end position="349"/>
    </location>
</feature>
<feature type="coiled-coil region" evidence="5">
    <location>
        <begin position="480"/>
        <end position="504"/>
    </location>
</feature>
<feature type="compositionally biased region" description="Pro residues" evidence="6">
    <location>
        <begin position="352"/>
        <end position="371"/>
    </location>
</feature>
<feature type="compositionally biased region" description="Low complexity" evidence="6">
    <location>
        <begin position="372"/>
        <end position="383"/>
    </location>
</feature>
<feature type="compositionally biased region" description="Basic and acidic residues" evidence="6">
    <location>
        <begin position="397"/>
        <end position="412"/>
    </location>
</feature>
<feature type="compositionally biased region" description="Pro residues" evidence="6">
    <location>
        <begin position="469"/>
        <end position="479"/>
    </location>
</feature>
<feature type="compositionally biased region" description="Basic and acidic residues" evidence="6">
    <location>
        <begin position="481"/>
        <end position="497"/>
    </location>
</feature>
<feature type="compositionally biased region" description="Polar residues" evidence="6">
    <location>
        <begin position="499"/>
        <end position="544"/>
    </location>
</feature>
<organism>
    <name type="scientific">Danio rerio</name>
    <name type="common">Zebrafish</name>
    <name type="synonym">Brachydanio rerio</name>
    <dbReference type="NCBI Taxonomy" id="7955"/>
    <lineage>
        <taxon>Eukaryota</taxon>
        <taxon>Metazoa</taxon>
        <taxon>Chordata</taxon>
        <taxon>Craniata</taxon>
        <taxon>Vertebrata</taxon>
        <taxon>Euteleostomi</taxon>
        <taxon>Actinopterygii</taxon>
        <taxon>Neopterygii</taxon>
        <taxon>Teleostei</taxon>
        <taxon>Ostariophysi</taxon>
        <taxon>Cypriniformes</taxon>
        <taxon>Danionidae</taxon>
        <taxon>Danioninae</taxon>
        <taxon>Danio</taxon>
    </lineage>
</organism>
<evidence type="ECO:0000250" key="1"/>
<evidence type="ECO:0000250" key="2">
    <source>
        <dbReference type="UniProtKB" id="A0MZ66"/>
    </source>
</evidence>
<evidence type="ECO:0000250" key="3">
    <source>
        <dbReference type="UniProtKB" id="A0MZ67"/>
    </source>
</evidence>
<evidence type="ECO:0000250" key="4">
    <source>
        <dbReference type="UniProtKB" id="Q8K2Q9"/>
    </source>
</evidence>
<evidence type="ECO:0000255" key="5"/>
<evidence type="ECO:0000256" key="6">
    <source>
        <dbReference type="SAM" id="MobiDB-lite"/>
    </source>
</evidence>
<evidence type="ECO:0000305" key="7"/>